<dbReference type="EC" id="2.4.1.136" evidence="4"/>
<dbReference type="EC" id="2.4.1.120" evidence="4"/>
<dbReference type="EC" id="2.4.1.170" evidence="4"/>
<dbReference type="EC" id="2.4.1.177" evidence="4"/>
<dbReference type="EC" id="2.4.1.194" evidence="4"/>
<dbReference type="EC" id="2.4.1.81" evidence="4"/>
<dbReference type="EMBL" id="KT159805">
    <property type="protein sequence ID" value="ANN02875.1"/>
    <property type="molecule type" value="mRNA"/>
</dbReference>
<dbReference type="EMBL" id="MTKT01002492">
    <property type="protein sequence ID" value="OWM79192.1"/>
    <property type="molecule type" value="Genomic_DNA"/>
</dbReference>
<dbReference type="EMBL" id="PGOL01006560">
    <property type="protein sequence ID" value="PKI33499.1"/>
    <property type="molecule type" value="Genomic_DNA"/>
</dbReference>
<dbReference type="SMR" id="A0A193AUF6"/>
<dbReference type="STRING" id="22663.A0A193AUF6"/>
<dbReference type="OrthoDB" id="5835829at2759"/>
<dbReference type="Proteomes" id="UP000197138">
    <property type="component" value="Unassembled WGS sequence"/>
</dbReference>
<dbReference type="Proteomes" id="UP000233551">
    <property type="component" value="Unassembled WGS sequence"/>
</dbReference>
<dbReference type="Proteomes" id="UP000515151">
    <property type="component" value="Chromosome 2"/>
</dbReference>
<dbReference type="GO" id="GO:0005737">
    <property type="term" value="C:cytoplasm"/>
    <property type="evidence" value="ECO:0000314"/>
    <property type="project" value="UniProtKB"/>
</dbReference>
<dbReference type="GO" id="GO:0047250">
    <property type="term" value="F:4-hydroxybenzoate 4-O-beta-D-glucosyltransferase activity"/>
    <property type="evidence" value="ECO:0007669"/>
    <property type="project" value="UniProtKB-EC"/>
</dbReference>
<dbReference type="GO" id="GO:0050412">
    <property type="term" value="F:cinnamate beta-D-glucosyltransferase activity"/>
    <property type="evidence" value="ECO:0000314"/>
    <property type="project" value="UniProtKB"/>
</dbReference>
<dbReference type="GO" id="GO:0047891">
    <property type="term" value="F:flavone 7-O-beta-glucosyltransferase activity"/>
    <property type="evidence" value="ECO:0000314"/>
    <property type="project" value="UniProtKB"/>
</dbReference>
<dbReference type="GO" id="GO:0047913">
    <property type="term" value="F:gallate 1-beta-glucosyltransferase activity"/>
    <property type="evidence" value="ECO:0000314"/>
    <property type="project" value="UniProtKB"/>
</dbReference>
<dbReference type="GO" id="GO:0050004">
    <property type="term" value="F:isoflavone 7-O-glucosyltransferase activity"/>
    <property type="evidence" value="ECO:0007669"/>
    <property type="project" value="UniProtKB-EC"/>
</dbReference>
<dbReference type="GO" id="GO:0080043">
    <property type="term" value="F:quercetin 3-O-glucosyltransferase activity"/>
    <property type="evidence" value="ECO:0007669"/>
    <property type="project" value="TreeGrafter"/>
</dbReference>
<dbReference type="GO" id="GO:0080044">
    <property type="term" value="F:quercetin 7-O-glucosyltransferase activity"/>
    <property type="evidence" value="ECO:0007669"/>
    <property type="project" value="TreeGrafter"/>
</dbReference>
<dbReference type="GO" id="GO:0050284">
    <property type="term" value="F:sinapate 1-glucosyltransferase activity"/>
    <property type="evidence" value="ECO:0000314"/>
    <property type="project" value="UniProtKB"/>
</dbReference>
<dbReference type="GO" id="GO:0035251">
    <property type="term" value="F:UDP-glucosyltransferase activity"/>
    <property type="evidence" value="ECO:0000314"/>
    <property type="project" value="UniProtKB"/>
</dbReference>
<dbReference type="GO" id="GO:0046278">
    <property type="term" value="P:3,4-dihydroxybenzoate metabolic process"/>
    <property type="evidence" value="ECO:0000314"/>
    <property type="project" value="UniProtKB"/>
</dbReference>
<dbReference type="GO" id="GO:0009801">
    <property type="term" value="P:cinnamic acid ester metabolic process"/>
    <property type="evidence" value="ECO:0000314"/>
    <property type="project" value="UniProtKB"/>
</dbReference>
<dbReference type="GO" id="GO:0033494">
    <property type="term" value="P:ferulate metabolic process"/>
    <property type="evidence" value="ECO:0000314"/>
    <property type="project" value="UniProtKB"/>
</dbReference>
<dbReference type="CDD" id="cd03784">
    <property type="entry name" value="GT1_Gtf-like"/>
    <property type="match status" value="1"/>
</dbReference>
<dbReference type="FunFam" id="3.40.50.2000:FF:000019">
    <property type="entry name" value="Glycosyltransferase"/>
    <property type="match status" value="1"/>
</dbReference>
<dbReference type="FunFam" id="3.40.50.2000:FF:000101">
    <property type="entry name" value="Glycosyltransferase"/>
    <property type="match status" value="1"/>
</dbReference>
<dbReference type="Gene3D" id="3.40.50.2000">
    <property type="entry name" value="Glycogen Phosphorylase B"/>
    <property type="match status" value="2"/>
</dbReference>
<dbReference type="InterPro" id="IPR002213">
    <property type="entry name" value="UDP_glucos_trans"/>
</dbReference>
<dbReference type="InterPro" id="IPR035595">
    <property type="entry name" value="UDP_glycos_trans_CS"/>
</dbReference>
<dbReference type="PANTHER" id="PTHR11926">
    <property type="entry name" value="GLUCOSYL/GLUCURONOSYL TRANSFERASES"/>
    <property type="match status" value="1"/>
</dbReference>
<dbReference type="PANTHER" id="PTHR11926:SF986">
    <property type="entry name" value="UDP-GLYCOSYLTRANSFERASE 84A1"/>
    <property type="match status" value="1"/>
</dbReference>
<dbReference type="Pfam" id="PF00201">
    <property type="entry name" value="UDPGT"/>
    <property type="match status" value="1"/>
</dbReference>
<dbReference type="SUPFAM" id="SSF53756">
    <property type="entry name" value="UDP-Glycosyltransferase/glycogen phosphorylase"/>
    <property type="match status" value="1"/>
</dbReference>
<dbReference type="PROSITE" id="PS00375">
    <property type="entry name" value="UDPGT"/>
    <property type="match status" value="1"/>
</dbReference>
<reference evidence="7" key="1">
    <citation type="journal article" date="2016" name="PLoS ONE">
        <title>Two UGT84 Family Glycosyltransferases Catalyze a Critical Reaction of Hydrolyzable Tannin Biosynthesis in Pomegranate (Punica granatum).</title>
        <authorList>
            <person name="Ono N.N."/>
            <person name="Qin X."/>
            <person name="Wilson A.E."/>
            <person name="Li G."/>
            <person name="Tian L."/>
        </authorList>
    </citation>
    <scope>NUCLEOTIDE SEQUENCE [MRNA]</scope>
    <scope>FUNCTION</scope>
    <scope>CATALYTIC ACTIVITY</scope>
    <scope>BIOPHYSICOCHEMICAL PROPERTIES</scope>
    <scope>SUBSTRATE SPECIFICITY</scope>
    <scope>SUBCELLULAR LOCATION</scope>
    <scope>TISSUE SPECIFICITY</scope>
    <scope>DISRUPTION PHENOTYPE</scope>
</reference>
<reference key="2">
    <citation type="journal article" date="2017" name="Plant J.">
        <title>The pomegranate (Punica granatum L.) genome and the genomics of punicalagin biosynthesis.</title>
        <authorList>
            <person name="Qin G."/>
            <person name="Xu C."/>
            <person name="Ming R."/>
            <person name="Tang H."/>
            <person name="Guyot R."/>
            <person name="Kramer E.M."/>
            <person name="Hu Y."/>
            <person name="Yi X."/>
            <person name="Qi Y."/>
            <person name="Xu X."/>
            <person name="Gao Z."/>
            <person name="Pan H."/>
            <person name="Jian J."/>
            <person name="Tian Y."/>
            <person name="Yue Z."/>
            <person name="Xu Y."/>
        </authorList>
    </citation>
    <scope>NUCLEOTIDE SEQUENCE [LARGE SCALE GENOMIC DNA]</scope>
    <source>
        <strain>cv. Dabenzi</strain>
        <tissue evidence="8">Leaf</tissue>
    </source>
</reference>
<reference evidence="9" key="3">
    <citation type="submission" date="2017-11" db="EMBL/GenBank/DDBJ databases">
        <title>De-novo sequencing of pomegranate (Punica granatum L.) genome.</title>
        <authorList>
            <person name="Akparov Z."/>
            <person name="Amiraslanov A."/>
            <person name="Hajiyeva S."/>
            <person name="Abbasov M."/>
            <person name="Kaur K."/>
            <person name="Hamwieh A."/>
            <person name="Solovyev V."/>
            <person name="Salamov A."/>
            <person name="Braich B."/>
            <person name="Kosarev P."/>
            <person name="Mahmoud A."/>
            <person name="Hajiyev E."/>
            <person name="Babayeva S."/>
            <person name="Izzatullayeva V."/>
            <person name="Mammadov A."/>
            <person name="Mammadov A."/>
            <person name="Sharifova S."/>
            <person name="Ojaghi J."/>
            <person name="Eynullazada K."/>
            <person name="Bayramov B."/>
            <person name="Abdulazimova A."/>
            <person name="Shahmuradov I."/>
        </authorList>
    </citation>
    <scope>NUCLEOTIDE SEQUENCE [LARGE SCALE GENOMIC DNA]</scope>
    <source>
        <strain>cv. AG2017</strain>
        <tissue evidence="9">Leaf</tissue>
    </source>
</reference>
<protein>
    <recommendedName>
        <fullName evidence="6">Gallate 1-beta-glucosyltransferase 84A23</fullName>
        <ecNumber evidence="4">2.4.1.136</ecNumber>
    </recommendedName>
    <alternativeName>
        <fullName evidence="6">UDP-glucose:gallate glucosyltransferase</fullName>
    </alternativeName>
    <alternativeName>
        <fullName evidence="5">UDP-glycosyltransferase 84A23</fullName>
        <ecNumber evidence="4">2.4.1.120</ecNumber>
        <ecNumber evidence="4">2.4.1.170</ecNumber>
        <ecNumber evidence="4">2.4.1.177</ecNumber>
        <ecNumber evidence="4">2.4.1.194</ecNumber>
        <ecNumber evidence="4">2.4.1.81</ecNumber>
    </alternativeName>
</protein>
<proteinExistence type="evidence at protein level"/>
<gene>
    <name evidence="5 7" type="primary">UGT84A23</name>
    <name evidence="8" type="ORF">CDL15_Pgr003363</name>
    <name evidence="9" type="ORF">CRG98_046055</name>
</gene>
<feature type="chain" id="PRO_0000452358" description="Gallate 1-beta-glucosyltransferase 84A23">
    <location>
        <begin position="1"/>
        <end position="506"/>
    </location>
</feature>
<feature type="active site" description="Proton acceptor" evidence="1">
    <location>
        <position position="20"/>
    </location>
</feature>
<feature type="binding site" evidence="2">
    <location>
        <position position="20"/>
    </location>
    <ligand>
        <name>an anthocyanidin</name>
        <dbReference type="ChEBI" id="CHEBI:143576"/>
    </ligand>
</feature>
<feature type="binding site" evidence="1">
    <location>
        <position position="345"/>
    </location>
    <ligand>
        <name>UDP-alpha-D-glucose</name>
        <dbReference type="ChEBI" id="CHEBI:58885"/>
    </ligand>
</feature>
<feature type="binding site" evidence="1">
    <location>
        <position position="360"/>
    </location>
    <ligand>
        <name>UDP-alpha-D-glucose</name>
        <dbReference type="ChEBI" id="CHEBI:58885"/>
    </ligand>
</feature>
<feature type="binding site" evidence="1">
    <location>
        <position position="363"/>
    </location>
    <ligand>
        <name>UDP-alpha-D-glucose</name>
        <dbReference type="ChEBI" id="CHEBI:58885"/>
    </ligand>
</feature>
<feature type="binding site" evidence="1">
    <location>
        <position position="364"/>
    </location>
    <ligand>
        <name>UDP-alpha-D-glucose</name>
        <dbReference type="ChEBI" id="CHEBI:58885"/>
    </ligand>
</feature>
<feature type="binding site" evidence="1">
    <location>
        <position position="365"/>
    </location>
    <ligand>
        <name>UDP-alpha-D-glucose</name>
        <dbReference type="ChEBI" id="CHEBI:58885"/>
    </ligand>
</feature>
<feature type="binding site" evidence="1">
    <location>
        <position position="368"/>
    </location>
    <ligand>
        <name>UDP-alpha-D-glucose</name>
        <dbReference type="ChEBI" id="CHEBI:58885"/>
    </ligand>
</feature>
<feature type="binding site" evidence="2">
    <location>
        <position position="383"/>
    </location>
    <ligand>
        <name>an anthocyanidin</name>
        <dbReference type="ChEBI" id="CHEBI:143576"/>
    </ligand>
</feature>
<feature type="binding site" evidence="1">
    <location>
        <position position="384"/>
    </location>
    <ligand>
        <name>UDP-alpha-D-glucose</name>
        <dbReference type="ChEBI" id="CHEBI:58885"/>
    </ligand>
</feature>
<feature type="binding site" evidence="1">
    <location>
        <position position="385"/>
    </location>
    <ligand>
        <name>UDP-alpha-D-glucose</name>
        <dbReference type="ChEBI" id="CHEBI:58885"/>
    </ligand>
</feature>
<comment type="function">
    <text evidence="4">Glucosyltransferase that catalyzes the formation of 1-O-beta-D-glucose esters with hydroxybenzoic acids and cinnamic acid including its derivatives as preferred glucosyl acceptors. Has significant activity with gallic acid (3,4,5-trihydroxybenzoic acid), 3,4-dihydroxybenzoic acid, 4-hydroxybenzoic acid, cinnamic acid, sinapic acid, coumaric acid, caffeic acid and ferulic acid in vitro. Gallic acid is the predicted native substrate of the enzyme, which thus catalyzes the formation of 1-O-galloyl-beta-D-glucose, the first committed step of hydrolyzable tannins (HTs) biosynthesis, with punicalagin isomers being the major HTs of pomegranate. Catalyzes the formation of flavonoid glucosides with genistein, apigenin and luteolin in vitro. Has low activity with benzoic acid, 2-hydroxybenzoic acid, 3-hydroxybenzoic acid, 2,4-dihydroxybenzoic acid, naringenin and quercetin. No activity with catechol, resveratrol, chlorogenic acid, catechin and epicatechin (building blocks of proanthocyanidins) or cyanidin, delphinidin and pelargonidin (the three anthocyanidins).</text>
</comment>
<comment type="catalytic activity">
    <reaction evidence="4">
        <text>3,4,5-trihydroxybenzoate + UDP-alpha-D-glucose = 1-O-galloyl-beta-D-glucose + UDP</text>
        <dbReference type="Rhea" id="RHEA:15249"/>
        <dbReference type="ChEBI" id="CHEBI:15834"/>
        <dbReference type="ChEBI" id="CHEBI:16918"/>
        <dbReference type="ChEBI" id="CHEBI:58223"/>
        <dbReference type="ChEBI" id="CHEBI:58885"/>
        <dbReference type="EC" id="2.4.1.136"/>
    </reaction>
</comment>
<comment type="catalytic activity">
    <reaction evidence="4">
        <text>3,4-dihydroxybenzoate + UDP-alpha-D-glucose = 1-O-(3,4-dihydroxy-benzoyl)-beta-D-glucose + UDP</text>
        <dbReference type="Rhea" id="RHEA:52844"/>
        <dbReference type="ChEBI" id="CHEBI:36241"/>
        <dbReference type="ChEBI" id="CHEBI:58223"/>
        <dbReference type="ChEBI" id="CHEBI:58885"/>
        <dbReference type="ChEBI" id="CHEBI:136876"/>
        <dbReference type="EC" id="2.4.1.136"/>
    </reaction>
</comment>
<comment type="catalytic activity">
    <reaction evidence="4">
        <text>4-hydroxybenzoate + UDP-alpha-D-glucose = 4-(beta-D-glucosyloxy)benzoate + UDP + H(+)</text>
        <dbReference type="Rhea" id="RHEA:15153"/>
        <dbReference type="ChEBI" id="CHEBI:11935"/>
        <dbReference type="ChEBI" id="CHEBI:15378"/>
        <dbReference type="ChEBI" id="CHEBI:17879"/>
        <dbReference type="ChEBI" id="CHEBI:58223"/>
        <dbReference type="ChEBI" id="CHEBI:58885"/>
        <dbReference type="EC" id="2.4.1.194"/>
    </reaction>
</comment>
<comment type="catalytic activity">
    <reaction evidence="4">
        <text>(E)-cinnamate + UDP-alpha-D-glucose = 1-O-(trans-cinnamoyl)-beta-D-glucose + UDP</text>
        <dbReference type="Rhea" id="RHEA:13437"/>
        <dbReference type="ChEBI" id="CHEBI:15669"/>
        <dbReference type="ChEBI" id="CHEBI:16279"/>
        <dbReference type="ChEBI" id="CHEBI:58223"/>
        <dbReference type="ChEBI" id="CHEBI:58885"/>
        <dbReference type="EC" id="2.4.1.177"/>
    </reaction>
</comment>
<comment type="catalytic activity">
    <reaction evidence="4">
        <text>(E)-sinapate + UDP-alpha-D-glucose = 1-O-(trans-sinapoyl)-beta-D-glucose + UDP</text>
        <dbReference type="Rhea" id="RHEA:13305"/>
        <dbReference type="ChEBI" id="CHEBI:16546"/>
        <dbReference type="ChEBI" id="CHEBI:30023"/>
        <dbReference type="ChEBI" id="CHEBI:58223"/>
        <dbReference type="ChEBI" id="CHEBI:58885"/>
        <dbReference type="EC" id="2.4.1.120"/>
    </reaction>
</comment>
<comment type="catalytic activity">
    <reaction evidence="4">
        <text>(E)-4-coumarate + UDP-alpha-D-glucose = 1-O-(trans-4-coumaroyl)-beta-D-glucose + UDP</text>
        <dbReference type="Rhea" id="RHEA:57472"/>
        <dbReference type="ChEBI" id="CHEBI:12876"/>
        <dbReference type="ChEBI" id="CHEBI:58223"/>
        <dbReference type="ChEBI" id="CHEBI:58885"/>
        <dbReference type="ChEBI" id="CHEBI:71498"/>
    </reaction>
</comment>
<comment type="catalytic activity">
    <reaction evidence="4">
        <text>(E)-caffeate + UDP-alpha-D-glucose = 1-O-[(E)-caffeoyl]-beta-D-glucose + UDP</text>
        <dbReference type="Rhea" id="RHEA:57464"/>
        <dbReference type="ChEBI" id="CHEBI:614"/>
        <dbReference type="ChEBI" id="CHEBI:57770"/>
        <dbReference type="ChEBI" id="CHEBI:58223"/>
        <dbReference type="ChEBI" id="CHEBI:58885"/>
    </reaction>
</comment>
<comment type="catalytic activity">
    <reaction evidence="4">
        <text>(E)-ferulate + UDP-alpha-D-glucose = 1-O-[(E)-feruloyl]-beta-D-glucose + UDP</text>
        <dbReference type="Rhea" id="RHEA:57468"/>
        <dbReference type="ChEBI" id="CHEBI:29749"/>
        <dbReference type="ChEBI" id="CHEBI:58223"/>
        <dbReference type="ChEBI" id="CHEBI:58885"/>
        <dbReference type="ChEBI" id="CHEBI:81321"/>
    </reaction>
</comment>
<comment type="catalytic activity">
    <reaction evidence="4">
        <text>genistein + UDP-alpha-D-glucose = genistein 7-O-beta-D-glucoside + UDP + H(+)</text>
        <dbReference type="Rhea" id="RHEA:56056"/>
        <dbReference type="ChEBI" id="CHEBI:15378"/>
        <dbReference type="ChEBI" id="CHEBI:58223"/>
        <dbReference type="ChEBI" id="CHEBI:58885"/>
        <dbReference type="ChEBI" id="CHEBI:74224"/>
        <dbReference type="ChEBI" id="CHEBI:140305"/>
        <dbReference type="EC" id="2.4.1.170"/>
    </reaction>
</comment>
<comment type="catalytic activity">
    <reaction evidence="4">
        <text>apigenin + UDP-alpha-D-glucose = apigenin 7-O-beta-D-glucoside + UDP + H(+)</text>
        <dbReference type="Rhea" id="RHEA:59760"/>
        <dbReference type="ChEBI" id="CHEBI:15378"/>
        <dbReference type="ChEBI" id="CHEBI:58223"/>
        <dbReference type="ChEBI" id="CHEBI:58470"/>
        <dbReference type="ChEBI" id="CHEBI:58885"/>
        <dbReference type="ChEBI" id="CHEBI:77722"/>
        <dbReference type="EC" id="2.4.1.81"/>
    </reaction>
</comment>
<comment type="catalytic activity">
    <reaction evidence="4">
        <text>luteolin + UDP-alpha-D-glucose = luteolin 7-O-beta-D-glucoside + UDP + H(+)</text>
        <dbReference type="Rhea" id="RHEA:19577"/>
        <dbReference type="ChEBI" id="CHEBI:15378"/>
        <dbReference type="ChEBI" id="CHEBI:57545"/>
        <dbReference type="ChEBI" id="CHEBI:58223"/>
        <dbReference type="ChEBI" id="CHEBI:58885"/>
        <dbReference type="ChEBI" id="CHEBI:77791"/>
        <dbReference type="EC" id="2.4.1.81"/>
    </reaction>
</comment>
<comment type="biophysicochemical properties">
    <kinetics>
        <KM evidence="4">0.89 mM for gallic acid (at pH 5.0 and 30 degrees Celsius)</KM>
        <KM evidence="4">1.19 mM for 4-hydroxybenzoic acid (at pH 5.0 and 30 degrees Celsius)</KM>
        <KM evidence="4">2.46 mM for 3,4-dihydroxybenzoic acid (at pH 5.0 and 30 degrees Celsius)</KM>
        <KM evidence="4">1.06 mM for caffeic acid (at pH 5.0 and 30 degrees Celsius)</KM>
        <KM evidence="4">1.12 mM for cinnamic acid (at pH 5.0 and 30 degrees Celsius)</KM>
        <KM evidence="4">0.94 mM for coumaric acid (at pH 5.0 and 30 degrees Celsius)</KM>
        <KM evidence="4">1.58 mM for ferulic acid (at pH 5.0 and 30 degrees Celsius)</KM>
        <KM evidence="4">0.86 mM for sinapic acid (at pH 5.0 and 30 degrees Celsius)</KM>
        <Vmax>0.37 uM/sec/mg enzyme with gallic acid as substrate (at pH 5.0 and 30 degrees Celsius)</Vmax>
        <Vmax>0.43 uM/sec/mg enzyme with 4-hydroxybenzoic acid as substrate (at pH 5.0 and 30 degrees Celsius)</Vmax>
        <Vmax>0.54 uM/sec/mg enzyme with 3,4-dihydroxybenzoic acid as substrate (at pH 5.0 and 30 degrees Celsius)</Vmax>
        <Vmax>0.45 uM/sec/mg enzyme with caffeic acid as substrate (at pH 5.0 and 30 degrees Celsius)</Vmax>
        <Vmax>0.4 uM/sec/mg enzyme with cinnamic acid as substrate (at pH 5.0 and 30 degrees Celsius)</Vmax>
        <Vmax>0.37 uM/sec/mg enzyme with coumaric acid as substrate (at pH 5.0 and 30 degrees Celsius)</Vmax>
        <Vmax>0.52 uM/sec/mg enzyme with ferulic acid as substrate (at pH 5.0 and 30 degrees Celsius)</Vmax>
        <Vmax>0.35 uM/sec/mg enzyme with sinapic acid as substrate (at pH 5.0 and 30 degrees Celsius)</Vmax>
        <text evidence="4">kcat is 0.52 sec(-1) with gallic acid as substrate. kcat is 0.61 sec(-1) with 4-hydroxybenzoic acid as substrate. kcat is 0.76 sec(-1) with 3,4-dihydroxybenzoic acid as substrate. kcat is 0.64 sec(-1) with caffeic acid as substrate. kcat is 0.56 sec(-1) with cinnamic acid as substrate. kcat is 0.52 sec(-1) with coumaric acid as substrate. kcat is 0.72 sec(-1) with ferulic acid as substrate. kcat is 0.5 sec(-1) with sinapic acid as substrate.</text>
    </kinetics>
    <phDependence>
        <text evidence="4">Optimum pH is 5.</text>
    </phDependence>
    <temperatureDependence>
        <text evidence="4">Activity remains fairly constant between 20-55 degrees Celsius. Active even at 0 degrees Celsius.</text>
    </temperatureDependence>
</comment>
<comment type="subcellular location">
    <subcellularLocation>
        <location evidence="4">Cytoplasm</location>
    </subcellularLocation>
</comment>
<comment type="tissue specificity">
    <text evidence="4">Expressed in roots of the seedlings.</text>
</comment>
<comment type="disruption phenotype">
    <text evidence="4">No difference in the levels of punicalagin in pomegranate hairy roots in a single RNAi knockdown of this gene. However, double RNAi knockdown of this gene together with UGT84A24 leads to significantly reduced levels of punicalagin and bis-hexahydroxydipheynyl glucose isomers, and to increased levels of galloyl glucosides (ether-linked gallic acid and glucose).</text>
</comment>
<comment type="similarity">
    <text evidence="3">Belongs to the UDP-glycosyltransferase family.</text>
</comment>
<organism evidence="7">
    <name type="scientific">Punica granatum</name>
    <name type="common">Pomegranate</name>
    <dbReference type="NCBI Taxonomy" id="22663"/>
    <lineage>
        <taxon>Eukaryota</taxon>
        <taxon>Viridiplantae</taxon>
        <taxon>Streptophyta</taxon>
        <taxon>Embryophyta</taxon>
        <taxon>Tracheophyta</taxon>
        <taxon>Spermatophyta</taxon>
        <taxon>Magnoliopsida</taxon>
        <taxon>eudicotyledons</taxon>
        <taxon>Gunneridae</taxon>
        <taxon>Pentapetalae</taxon>
        <taxon>rosids</taxon>
        <taxon>malvids</taxon>
        <taxon>Myrtales</taxon>
        <taxon>Lythraceae</taxon>
        <taxon>Punica</taxon>
    </lineage>
</organism>
<keyword id="KW-0963">Cytoplasm</keyword>
<keyword id="KW-0328">Glycosyltransferase</keyword>
<keyword id="KW-1185">Reference proteome</keyword>
<keyword id="KW-0808">Transferase</keyword>
<evidence type="ECO:0000250" key="1">
    <source>
        <dbReference type="UniProtKB" id="A0A0A1HA03"/>
    </source>
</evidence>
<evidence type="ECO:0000250" key="2">
    <source>
        <dbReference type="UniProtKB" id="P51094"/>
    </source>
</evidence>
<evidence type="ECO:0000255" key="3">
    <source>
        <dbReference type="RuleBase" id="RU003718"/>
    </source>
</evidence>
<evidence type="ECO:0000269" key="4">
    <source>
    </source>
</evidence>
<evidence type="ECO:0000303" key="5">
    <source>
    </source>
</evidence>
<evidence type="ECO:0000305" key="6"/>
<evidence type="ECO:0000312" key="7">
    <source>
        <dbReference type="EMBL" id="ANN02875.1"/>
    </source>
</evidence>
<evidence type="ECO:0000312" key="8">
    <source>
        <dbReference type="EMBL" id="OWM79192.1"/>
    </source>
</evidence>
<evidence type="ECO:0000312" key="9">
    <source>
        <dbReference type="EMBL" id="PKI33499.1"/>
    </source>
</evidence>
<name>GGT23_PUNGR</name>
<sequence>MGSESSLVHVFLVSFPGQGHVNPLLRLGKRLASKGLLVTFTTPESIGKQMRKASNISDQPAPVGDGFIRFEFFEDGWDEDEPRRQDLDQYLPQLEKVGKVLIPQMIQKNAEQGRPVSCLINNPFIPWVSDVAETLGLPSAMLWVQSCACFLAYYHYYHGLVPFPSENAMEIDVQLPSMPLLKHDEVPSFLYPTTPYPFLRRAILGQYKNLEKPFCILMDTFQELEHEIIEYTSKICPIKTVGPLFKNPKAPNTTVKGDFMKADDCIGWLDSKPASSVVYVSFGSVVYLKQDQWDEIAYGLLNSGVNFLWVMKPPHKDSGYTVLTLPEGFLEKAGDRGKVVQWSPQEQVLAHPATACFVTHCGWNSSMEALTSGMPVVAFPQWGDQVTDAKYLVDEFKVGVRMCRGEAEDKLITRDVVEQCLREATQGPKAAEMKKNALKWKAAAEASFVEGGSSDRNLQAFVDEVKRRSIEITASKPAVKAAPNGVVAAAESVVETKANGKVELAA</sequence>
<accession>A0A193AUF6</accession>